<protein>
    <recommendedName>
        <fullName evidence="1">Small ribosomal subunit protein uS2</fullName>
    </recommendedName>
    <alternativeName>
        <fullName evidence="2">30S ribosomal protein S2</fullName>
    </alternativeName>
</protein>
<accession>Q5FUV7</accession>
<evidence type="ECO:0000255" key="1">
    <source>
        <dbReference type="HAMAP-Rule" id="MF_00291"/>
    </source>
</evidence>
<evidence type="ECO:0000305" key="2"/>
<proteinExistence type="inferred from homology"/>
<comment type="similarity">
    <text evidence="1">Belongs to the universal ribosomal protein uS2 family.</text>
</comment>
<keyword id="KW-1185">Reference proteome</keyword>
<keyword id="KW-0687">Ribonucleoprotein</keyword>
<keyword id="KW-0689">Ribosomal protein</keyword>
<feature type="chain" id="PRO_1000003968" description="Small ribosomal subunit protein uS2">
    <location>
        <begin position="1"/>
        <end position="265"/>
    </location>
</feature>
<reference key="1">
    <citation type="journal article" date="2005" name="Nat. Biotechnol.">
        <title>Complete genome sequence of the acetic acid bacterium Gluconobacter oxydans.</title>
        <authorList>
            <person name="Prust C."/>
            <person name="Hoffmeister M."/>
            <person name="Liesegang H."/>
            <person name="Wiezer A."/>
            <person name="Fricke W.F."/>
            <person name="Ehrenreich A."/>
            <person name="Gottschalk G."/>
            <person name="Deppenmeier U."/>
        </authorList>
    </citation>
    <scope>NUCLEOTIDE SEQUENCE [LARGE SCALE GENOMIC DNA]</scope>
    <source>
        <strain>621H</strain>
    </source>
</reference>
<dbReference type="EMBL" id="CP000009">
    <property type="protein sequence ID" value="AAW59872.1"/>
    <property type="molecule type" value="Genomic_DNA"/>
</dbReference>
<dbReference type="RefSeq" id="WP_011251676.1">
    <property type="nucleotide sequence ID" value="NZ_LT900338.1"/>
</dbReference>
<dbReference type="SMR" id="Q5FUV7"/>
<dbReference type="STRING" id="290633.GOX0075"/>
<dbReference type="KEGG" id="gox:GOX0075"/>
<dbReference type="eggNOG" id="COG0052">
    <property type="taxonomic scope" value="Bacteria"/>
</dbReference>
<dbReference type="HOGENOM" id="CLU_040318_2_1_5"/>
<dbReference type="Proteomes" id="UP000006375">
    <property type="component" value="Chromosome"/>
</dbReference>
<dbReference type="GO" id="GO:0022627">
    <property type="term" value="C:cytosolic small ribosomal subunit"/>
    <property type="evidence" value="ECO:0007669"/>
    <property type="project" value="TreeGrafter"/>
</dbReference>
<dbReference type="GO" id="GO:0003735">
    <property type="term" value="F:structural constituent of ribosome"/>
    <property type="evidence" value="ECO:0007669"/>
    <property type="project" value="InterPro"/>
</dbReference>
<dbReference type="GO" id="GO:0006412">
    <property type="term" value="P:translation"/>
    <property type="evidence" value="ECO:0007669"/>
    <property type="project" value="UniProtKB-UniRule"/>
</dbReference>
<dbReference type="CDD" id="cd01425">
    <property type="entry name" value="RPS2"/>
    <property type="match status" value="1"/>
</dbReference>
<dbReference type="FunFam" id="1.10.287.610:FF:000001">
    <property type="entry name" value="30S ribosomal protein S2"/>
    <property type="match status" value="1"/>
</dbReference>
<dbReference type="Gene3D" id="3.40.50.10490">
    <property type="entry name" value="Glucose-6-phosphate isomerase like protein, domain 1"/>
    <property type="match status" value="1"/>
</dbReference>
<dbReference type="Gene3D" id="1.10.287.610">
    <property type="entry name" value="Helix hairpin bin"/>
    <property type="match status" value="1"/>
</dbReference>
<dbReference type="HAMAP" id="MF_00291_B">
    <property type="entry name" value="Ribosomal_uS2_B"/>
    <property type="match status" value="1"/>
</dbReference>
<dbReference type="InterPro" id="IPR001865">
    <property type="entry name" value="Ribosomal_uS2"/>
</dbReference>
<dbReference type="InterPro" id="IPR005706">
    <property type="entry name" value="Ribosomal_uS2_bac/mit/plastid"/>
</dbReference>
<dbReference type="InterPro" id="IPR018130">
    <property type="entry name" value="Ribosomal_uS2_CS"/>
</dbReference>
<dbReference type="InterPro" id="IPR023591">
    <property type="entry name" value="Ribosomal_uS2_flav_dom_sf"/>
</dbReference>
<dbReference type="NCBIfam" id="TIGR01011">
    <property type="entry name" value="rpsB_bact"/>
    <property type="match status" value="1"/>
</dbReference>
<dbReference type="PANTHER" id="PTHR12534">
    <property type="entry name" value="30S RIBOSOMAL PROTEIN S2 PROKARYOTIC AND ORGANELLAR"/>
    <property type="match status" value="1"/>
</dbReference>
<dbReference type="PANTHER" id="PTHR12534:SF0">
    <property type="entry name" value="SMALL RIBOSOMAL SUBUNIT PROTEIN US2M"/>
    <property type="match status" value="1"/>
</dbReference>
<dbReference type="Pfam" id="PF00318">
    <property type="entry name" value="Ribosomal_S2"/>
    <property type="match status" value="1"/>
</dbReference>
<dbReference type="PRINTS" id="PR00395">
    <property type="entry name" value="RIBOSOMALS2"/>
</dbReference>
<dbReference type="SUPFAM" id="SSF52313">
    <property type="entry name" value="Ribosomal protein S2"/>
    <property type="match status" value="1"/>
</dbReference>
<dbReference type="PROSITE" id="PS00962">
    <property type="entry name" value="RIBOSOMAL_S2_1"/>
    <property type="match status" value="1"/>
</dbReference>
<dbReference type="PROSITE" id="PS00963">
    <property type="entry name" value="RIBOSOMAL_S2_2"/>
    <property type="match status" value="1"/>
</dbReference>
<sequence length="265" mass="28439">MAMPDFTMRQLLEAGVHFGHHTRRWNPAMAPYLFGVRNQVHIIDLQQTVPMLDRALKVVRDTVANGGRVLFVGTKRAAADHVAEAAQRCGQYYVNHRWLGGMLTNWKTITGSIKRLRQIDEMLSGDTAGLTKKEVLDITRDREKLERSLGGIKEMGGLPDLLFVIDTNKEKLAIEEATKLGIPVIGVLDSNSNPAGVTYPIPGNDDAIRAITLYCDLVSGAVLDGISAELAASGQDIGAAEELPAETAVLEAAAAEGAEAPASAG</sequence>
<gene>
    <name evidence="1" type="primary">rpsB</name>
    <name type="ordered locus">GOX0075</name>
</gene>
<organism>
    <name type="scientific">Gluconobacter oxydans (strain 621H)</name>
    <name type="common">Gluconobacter suboxydans</name>
    <dbReference type="NCBI Taxonomy" id="290633"/>
    <lineage>
        <taxon>Bacteria</taxon>
        <taxon>Pseudomonadati</taxon>
        <taxon>Pseudomonadota</taxon>
        <taxon>Alphaproteobacteria</taxon>
        <taxon>Acetobacterales</taxon>
        <taxon>Acetobacteraceae</taxon>
        <taxon>Gluconobacter</taxon>
    </lineage>
</organism>
<name>RS2_GLUOX</name>